<evidence type="ECO:0000255" key="1">
    <source>
        <dbReference type="HAMAP-Rule" id="MF_01008"/>
    </source>
</evidence>
<evidence type="ECO:0000255" key="2">
    <source>
        <dbReference type="PROSITE-ProRule" id="PRU01076"/>
    </source>
</evidence>
<keyword id="KW-0963">Cytoplasm</keyword>
<keyword id="KW-0238">DNA-binding</keyword>
<keyword id="KW-1185">Reference proteome</keyword>
<keyword id="KW-0677">Repeat</keyword>
<keyword id="KW-0804">Transcription</keyword>
<keyword id="KW-0805">Transcription regulation</keyword>
<dbReference type="EMBL" id="CP000454">
    <property type="protein sequence ID" value="ABK02955.1"/>
    <property type="molecule type" value="Genomic_DNA"/>
</dbReference>
<dbReference type="RefSeq" id="WP_011691421.1">
    <property type="nucleotide sequence ID" value="NC_008541.1"/>
</dbReference>
<dbReference type="SMR" id="A0JV85"/>
<dbReference type="STRING" id="290399.Arth_1561"/>
<dbReference type="KEGG" id="art:Arth_1561"/>
<dbReference type="eggNOG" id="COG2001">
    <property type="taxonomic scope" value="Bacteria"/>
</dbReference>
<dbReference type="HOGENOM" id="CLU_107907_0_5_11"/>
<dbReference type="OrthoDB" id="9807753at2"/>
<dbReference type="Proteomes" id="UP000000754">
    <property type="component" value="Chromosome"/>
</dbReference>
<dbReference type="GO" id="GO:0005737">
    <property type="term" value="C:cytoplasm"/>
    <property type="evidence" value="ECO:0007669"/>
    <property type="project" value="UniProtKB-UniRule"/>
</dbReference>
<dbReference type="GO" id="GO:0009295">
    <property type="term" value="C:nucleoid"/>
    <property type="evidence" value="ECO:0007669"/>
    <property type="project" value="UniProtKB-SubCell"/>
</dbReference>
<dbReference type="GO" id="GO:0003700">
    <property type="term" value="F:DNA-binding transcription factor activity"/>
    <property type="evidence" value="ECO:0007669"/>
    <property type="project" value="UniProtKB-UniRule"/>
</dbReference>
<dbReference type="GO" id="GO:0000976">
    <property type="term" value="F:transcription cis-regulatory region binding"/>
    <property type="evidence" value="ECO:0007669"/>
    <property type="project" value="TreeGrafter"/>
</dbReference>
<dbReference type="GO" id="GO:2000143">
    <property type="term" value="P:negative regulation of DNA-templated transcription initiation"/>
    <property type="evidence" value="ECO:0007669"/>
    <property type="project" value="TreeGrafter"/>
</dbReference>
<dbReference type="CDD" id="cd16321">
    <property type="entry name" value="MraZ_C"/>
    <property type="match status" value="1"/>
</dbReference>
<dbReference type="CDD" id="cd16320">
    <property type="entry name" value="MraZ_N"/>
    <property type="match status" value="1"/>
</dbReference>
<dbReference type="Gene3D" id="3.40.1550.20">
    <property type="entry name" value="Transcriptional regulator MraZ domain"/>
    <property type="match status" value="1"/>
</dbReference>
<dbReference type="HAMAP" id="MF_01008">
    <property type="entry name" value="MraZ"/>
    <property type="match status" value="1"/>
</dbReference>
<dbReference type="InterPro" id="IPR003444">
    <property type="entry name" value="MraZ"/>
</dbReference>
<dbReference type="InterPro" id="IPR035644">
    <property type="entry name" value="MraZ_C"/>
</dbReference>
<dbReference type="InterPro" id="IPR020603">
    <property type="entry name" value="MraZ_dom"/>
</dbReference>
<dbReference type="InterPro" id="IPR035642">
    <property type="entry name" value="MraZ_N"/>
</dbReference>
<dbReference type="InterPro" id="IPR038619">
    <property type="entry name" value="MraZ_sf"/>
</dbReference>
<dbReference type="InterPro" id="IPR007159">
    <property type="entry name" value="SpoVT-AbrB_dom"/>
</dbReference>
<dbReference type="InterPro" id="IPR037914">
    <property type="entry name" value="SpoVT-AbrB_sf"/>
</dbReference>
<dbReference type="NCBIfam" id="TIGR00242">
    <property type="entry name" value="division/cell wall cluster transcriptional repressor MraZ"/>
    <property type="match status" value="1"/>
</dbReference>
<dbReference type="PANTHER" id="PTHR34701">
    <property type="entry name" value="TRANSCRIPTIONAL REGULATOR MRAZ"/>
    <property type="match status" value="1"/>
</dbReference>
<dbReference type="PANTHER" id="PTHR34701:SF1">
    <property type="entry name" value="TRANSCRIPTIONAL REGULATOR MRAZ"/>
    <property type="match status" value="1"/>
</dbReference>
<dbReference type="Pfam" id="PF02381">
    <property type="entry name" value="MraZ"/>
    <property type="match status" value="2"/>
</dbReference>
<dbReference type="SUPFAM" id="SSF89447">
    <property type="entry name" value="AbrB/MazE/MraZ-like"/>
    <property type="match status" value="1"/>
</dbReference>
<dbReference type="PROSITE" id="PS51740">
    <property type="entry name" value="SPOVT_ABRB"/>
    <property type="match status" value="2"/>
</dbReference>
<sequence length="142" mass="15959">MFLGTHSPRLDEKGRIILPAKFREELASGLVLTRGQERCIYVFSEREFGRIHEQMREAPISSKQTRDYIRVFLSGASDEVPDKQGRVTIPPALRAYAGLGRELAVIGAGSRAEIWDAQAWNEYLAEKETSFSETDDAIPGIF</sequence>
<feature type="chain" id="PRO_1000062847" description="Transcriptional regulator MraZ">
    <location>
        <begin position="1"/>
        <end position="142"/>
    </location>
</feature>
<feature type="domain" description="SpoVT-AbrB 1" evidence="2">
    <location>
        <begin position="5"/>
        <end position="47"/>
    </location>
</feature>
<feature type="domain" description="SpoVT-AbrB 2" evidence="2">
    <location>
        <begin position="76"/>
        <end position="119"/>
    </location>
</feature>
<proteinExistence type="inferred from homology"/>
<name>MRAZ_ARTS2</name>
<gene>
    <name evidence="1" type="primary">mraZ</name>
    <name type="ordered locus">Arth_1561</name>
</gene>
<organism>
    <name type="scientific">Arthrobacter sp. (strain FB24)</name>
    <dbReference type="NCBI Taxonomy" id="290399"/>
    <lineage>
        <taxon>Bacteria</taxon>
        <taxon>Bacillati</taxon>
        <taxon>Actinomycetota</taxon>
        <taxon>Actinomycetes</taxon>
        <taxon>Micrococcales</taxon>
        <taxon>Micrococcaceae</taxon>
        <taxon>Arthrobacter</taxon>
    </lineage>
</organism>
<protein>
    <recommendedName>
        <fullName>Transcriptional regulator MraZ</fullName>
    </recommendedName>
</protein>
<reference key="1">
    <citation type="journal article" date="2013" name="Stand. Genomic Sci.">
        <title>Complete genome sequence of Arthrobacter sp. strain FB24.</title>
        <authorList>
            <person name="Nakatsu C.H."/>
            <person name="Barabote R."/>
            <person name="Thompson S."/>
            <person name="Bruce D."/>
            <person name="Detter C."/>
            <person name="Brettin T."/>
            <person name="Han C."/>
            <person name="Beasley F."/>
            <person name="Chen W."/>
            <person name="Konopka A."/>
            <person name="Xie G."/>
        </authorList>
    </citation>
    <scope>NUCLEOTIDE SEQUENCE [LARGE SCALE GENOMIC DNA]</scope>
    <source>
        <strain>FB24</strain>
    </source>
</reference>
<accession>A0JV85</accession>
<comment type="subunit">
    <text evidence="1">Forms oligomers.</text>
</comment>
<comment type="subcellular location">
    <subcellularLocation>
        <location evidence="1">Cytoplasm</location>
        <location evidence="1">Nucleoid</location>
    </subcellularLocation>
</comment>
<comment type="similarity">
    <text evidence="1">Belongs to the MraZ family.</text>
</comment>